<keyword id="KW-0050">Antiport</keyword>
<keyword id="KW-0997">Cell inner membrane</keyword>
<keyword id="KW-1003">Cell membrane</keyword>
<keyword id="KW-0406">Ion transport</keyword>
<keyword id="KW-0472">Membrane</keyword>
<keyword id="KW-0915">Sodium</keyword>
<keyword id="KW-0739">Sodium transport</keyword>
<keyword id="KW-0812">Transmembrane</keyword>
<keyword id="KW-1133">Transmembrane helix</keyword>
<keyword id="KW-0813">Transport</keyword>
<reference key="1">
    <citation type="journal article" date="2004" name="Proc. Natl. Acad. Sci. U.S.A.">
        <title>Genomic analysis of Bacteroides fragilis reveals extensive DNA inversions regulating cell surface adaptation.</title>
        <authorList>
            <person name="Kuwahara T."/>
            <person name="Yamashita A."/>
            <person name="Hirakawa H."/>
            <person name="Nakayama H."/>
            <person name="Toh H."/>
            <person name="Okada N."/>
            <person name="Kuhara S."/>
            <person name="Hattori M."/>
            <person name="Hayashi T."/>
            <person name="Ohnishi Y."/>
        </authorList>
    </citation>
    <scope>NUCLEOTIDE SEQUENCE [LARGE SCALE GENOMIC DNA]</scope>
    <source>
        <strain>YCH46</strain>
    </source>
</reference>
<accession>Q64T76</accession>
<evidence type="ECO:0000255" key="1">
    <source>
        <dbReference type="HAMAP-Rule" id="MF_01844"/>
    </source>
</evidence>
<gene>
    <name evidence="1" type="primary">nhaA</name>
    <name type="ordered locus">BF2554</name>
</gene>
<protein>
    <recommendedName>
        <fullName evidence="1">Na(+)/H(+) antiporter NhaA</fullName>
    </recommendedName>
    <alternativeName>
        <fullName evidence="1">Sodium/proton antiporter NhaA</fullName>
    </alternativeName>
</protein>
<feature type="chain" id="PRO_0000334231" description="Na(+)/H(+) antiporter NhaA">
    <location>
        <begin position="1"/>
        <end position="437"/>
    </location>
</feature>
<feature type="transmembrane region" description="Helical" evidence="1">
    <location>
        <begin position="12"/>
        <end position="32"/>
    </location>
</feature>
<feature type="transmembrane region" description="Helical" evidence="1">
    <location>
        <begin position="65"/>
        <end position="85"/>
    </location>
</feature>
<feature type="transmembrane region" description="Helical" evidence="1">
    <location>
        <begin position="103"/>
        <end position="123"/>
    </location>
</feature>
<feature type="transmembrane region" description="Helical" evidence="1">
    <location>
        <begin position="133"/>
        <end position="153"/>
    </location>
</feature>
<feature type="transmembrane region" description="Helical" evidence="1">
    <location>
        <begin position="162"/>
        <end position="182"/>
    </location>
</feature>
<feature type="transmembrane region" description="Helical" evidence="1">
    <location>
        <begin position="186"/>
        <end position="206"/>
    </location>
</feature>
<feature type="transmembrane region" description="Helical" evidence="1">
    <location>
        <begin position="214"/>
        <end position="234"/>
    </location>
</feature>
<feature type="transmembrane region" description="Helical" evidence="1">
    <location>
        <begin position="308"/>
        <end position="328"/>
    </location>
</feature>
<feature type="transmembrane region" description="Helical" evidence="1">
    <location>
        <begin position="333"/>
        <end position="353"/>
    </location>
</feature>
<feature type="transmembrane region" description="Helical" evidence="1">
    <location>
        <begin position="377"/>
        <end position="397"/>
    </location>
</feature>
<feature type="transmembrane region" description="Helical" evidence="1">
    <location>
        <begin position="412"/>
        <end position="432"/>
    </location>
</feature>
<sequence>MTVLRSMKDFSSMNITASILLFVTAIAAAVIANSPAASVYQEFLSHELHFRIGGFNLLSHAGHNLTMIEFINDGLMTIFFLMVGLEIKRELLVGELSSFRKAALPFIAACGGMVVPVVIYSMVCAPGTEGGQGLAIPMATDIAFSLGVLSLLGKRVPLSLKIFLTAFAVVDDIGGILVIAIFYSSHVAYEYLLWAALLYVLLYFIGKKGATNKIFFLVVGVVIWYLFLQSGIHSTISGVILAFVIPAKPQLNVGTYIERIRRIISTFPEMGANNIVLTNQQIAKLKEVESASDRVISPLQSLEDNLHGAVNYLVLPLFAFVNAGVMFSGEGEVIGGVTLAVALGLLAGKFLGIYSFTWLAVKSGLTPMPLGMNWKNISGVALLGGIGFTVSLFIANLSFGSAHPVLLNQAKLGVLSGTVMAGILGYLVLHWVLPQRR</sequence>
<name>NHAA_BACFR</name>
<proteinExistence type="inferred from homology"/>
<comment type="function">
    <text evidence="1">Na(+)/H(+) antiporter that extrudes sodium in exchange for external protons.</text>
</comment>
<comment type="catalytic activity">
    <reaction evidence="1">
        <text>Na(+)(in) + 2 H(+)(out) = Na(+)(out) + 2 H(+)(in)</text>
        <dbReference type="Rhea" id="RHEA:29251"/>
        <dbReference type="ChEBI" id="CHEBI:15378"/>
        <dbReference type="ChEBI" id="CHEBI:29101"/>
    </reaction>
    <physiologicalReaction direction="left-to-right" evidence="1">
        <dbReference type="Rhea" id="RHEA:29252"/>
    </physiologicalReaction>
</comment>
<comment type="subcellular location">
    <subcellularLocation>
        <location evidence="1">Cell inner membrane</location>
        <topology evidence="1">Multi-pass membrane protein</topology>
    </subcellularLocation>
</comment>
<comment type="similarity">
    <text evidence="1">Belongs to the NhaA Na(+)/H(+) (TC 2.A.33) antiporter family.</text>
</comment>
<dbReference type="EMBL" id="AP006841">
    <property type="protein sequence ID" value="BAD49303.1"/>
    <property type="molecule type" value="Genomic_DNA"/>
</dbReference>
<dbReference type="RefSeq" id="WP_005788084.1">
    <property type="nucleotide sequence ID" value="NC_006347.1"/>
</dbReference>
<dbReference type="RefSeq" id="YP_099837.1">
    <property type="nucleotide sequence ID" value="NC_006347.1"/>
</dbReference>
<dbReference type="SMR" id="Q64T76"/>
<dbReference type="STRING" id="295405.BF2554"/>
<dbReference type="KEGG" id="bfr:BF2554"/>
<dbReference type="PATRIC" id="fig|295405.11.peg.2463"/>
<dbReference type="HOGENOM" id="CLU_015803_1_2_10"/>
<dbReference type="OrthoDB" id="9808135at2"/>
<dbReference type="Proteomes" id="UP000002197">
    <property type="component" value="Chromosome"/>
</dbReference>
<dbReference type="GO" id="GO:0005886">
    <property type="term" value="C:plasma membrane"/>
    <property type="evidence" value="ECO:0007669"/>
    <property type="project" value="UniProtKB-SubCell"/>
</dbReference>
<dbReference type="GO" id="GO:0015385">
    <property type="term" value="F:sodium:proton antiporter activity"/>
    <property type="evidence" value="ECO:0007669"/>
    <property type="project" value="TreeGrafter"/>
</dbReference>
<dbReference type="GO" id="GO:0006885">
    <property type="term" value="P:regulation of pH"/>
    <property type="evidence" value="ECO:0007669"/>
    <property type="project" value="InterPro"/>
</dbReference>
<dbReference type="Gene3D" id="1.20.1530.10">
    <property type="entry name" value="Na+/H+ antiporter like domain"/>
    <property type="match status" value="1"/>
</dbReference>
<dbReference type="HAMAP" id="MF_01844">
    <property type="entry name" value="NhaA"/>
    <property type="match status" value="1"/>
</dbReference>
<dbReference type="InterPro" id="IPR023171">
    <property type="entry name" value="Na/H_antiporter_dom_sf"/>
</dbReference>
<dbReference type="InterPro" id="IPR004670">
    <property type="entry name" value="NhaA"/>
</dbReference>
<dbReference type="NCBIfam" id="TIGR00773">
    <property type="entry name" value="NhaA"/>
    <property type="match status" value="1"/>
</dbReference>
<dbReference type="PANTHER" id="PTHR30341:SF0">
    <property type="entry name" value="NA(+)_H(+) ANTIPORTER NHAA"/>
    <property type="match status" value="1"/>
</dbReference>
<dbReference type="PANTHER" id="PTHR30341">
    <property type="entry name" value="SODIUM ION/PROTON ANTIPORTER NHAA-RELATED"/>
    <property type="match status" value="1"/>
</dbReference>
<dbReference type="Pfam" id="PF06965">
    <property type="entry name" value="Na_H_antiport_1"/>
    <property type="match status" value="1"/>
</dbReference>
<organism>
    <name type="scientific">Bacteroides fragilis (strain YCH46)</name>
    <dbReference type="NCBI Taxonomy" id="295405"/>
    <lineage>
        <taxon>Bacteria</taxon>
        <taxon>Pseudomonadati</taxon>
        <taxon>Bacteroidota</taxon>
        <taxon>Bacteroidia</taxon>
        <taxon>Bacteroidales</taxon>
        <taxon>Bacteroidaceae</taxon>
        <taxon>Bacteroides</taxon>
    </lineage>
</organism>